<evidence type="ECO:0000305" key="1"/>
<accession>P27342</accession>
<accession>O68957</accession>
<proteinExistence type="predicted"/>
<sequence length="147" mass="14699">MAWHRNIKTRGAMVVAAVTLGASGVAAAQSMSTNSASFNAGYGRSSGQESRMVEYSTRDANGNRVVVDGVMLTGSDQSVFSSSRSSGSLDAYSGVGAVGGYAGSTAIGNNLTVITQGNNNTVIVNSSQVNSGNVTAGANVVKGGTPK</sequence>
<keyword id="KW-0130">Cell adhesion</keyword>
<keyword id="KW-1185">Reference proteome</keyword>
<reference key="1">
    <citation type="journal article" date="1992" name="J. Bacteriol.">
        <title>Analysis of a Caulobacter crescentus gene cluster involved in attachment of the holdfast to the cell.</title>
        <authorList>
            <person name="Kurtz H.D. Jr."/>
            <person name="Smit J."/>
        </authorList>
    </citation>
    <scope>NUCLEOTIDE SEQUENCE [GENOMIC DNA]</scope>
    <source>
        <strain>CB2</strain>
    </source>
</reference>
<reference key="2">
    <citation type="journal article" date="1999" name="J. Bacteriol.">
        <title>Cell cycle control of a holdfast attachment gene in Caulobacter crescentus.</title>
        <authorList>
            <person name="Janakiraman R.S."/>
            <person name="Brun Y.V."/>
        </authorList>
    </citation>
    <scope>NUCLEOTIDE SEQUENCE [GENOMIC DNA]</scope>
    <source>
        <strain>ATCC 19089 / CIP 103742 / CB 15</strain>
    </source>
</reference>
<reference key="3">
    <citation type="journal article" date="2001" name="Proc. Natl. Acad. Sci. U.S.A.">
        <title>Complete genome sequence of Caulobacter crescentus.</title>
        <authorList>
            <person name="Nierman W.C."/>
            <person name="Feldblyum T.V."/>
            <person name="Laub M.T."/>
            <person name="Paulsen I.T."/>
            <person name="Nelson K.E."/>
            <person name="Eisen J.A."/>
            <person name="Heidelberg J.F."/>
            <person name="Alley M.R.K."/>
            <person name="Ohta N."/>
            <person name="Maddock J.R."/>
            <person name="Potocka I."/>
            <person name="Nelson W.C."/>
            <person name="Newton A."/>
            <person name="Stephens C."/>
            <person name="Phadke N.D."/>
            <person name="Ely B."/>
            <person name="DeBoy R.T."/>
            <person name="Dodson R.J."/>
            <person name="Durkin A.S."/>
            <person name="Gwinn M.L."/>
            <person name="Haft D.H."/>
            <person name="Kolonay J.F."/>
            <person name="Smit J."/>
            <person name="Craven M.B."/>
            <person name="Khouri H.M."/>
            <person name="Shetty J."/>
            <person name="Berry K.J."/>
            <person name="Utterback T.R."/>
            <person name="Tran K."/>
            <person name="Wolf A.M."/>
            <person name="Vamathevan J.J."/>
            <person name="Ermolaeva M.D."/>
            <person name="White O."/>
            <person name="Salzberg S.L."/>
            <person name="Venter J.C."/>
            <person name="Shapiro L."/>
            <person name="Fraser C.M."/>
        </authorList>
    </citation>
    <scope>NUCLEOTIDE SEQUENCE [LARGE SCALE GENOMIC DNA]</scope>
    <source>
        <strain>ATCC 19089 / CIP 103742 / CB 15</strain>
    </source>
</reference>
<organism>
    <name type="scientific">Caulobacter vibrioides (strain ATCC 19089 / CIP 103742 / CB 15)</name>
    <name type="common">Caulobacter crescentus</name>
    <dbReference type="NCBI Taxonomy" id="190650"/>
    <lineage>
        <taxon>Bacteria</taxon>
        <taxon>Pseudomonadati</taxon>
        <taxon>Pseudomonadota</taxon>
        <taxon>Alphaproteobacteria</taxon>
        <taxon>Caulobacterales</taxon>
        <taxon>Caulobacteraceae</taxon>
        <taxon>Caulobacter</taxon>
    </lineage>
</organism>
<feature type="chain" id="PRO_0000083956" description="Holdfast attachment protein A">
    <location>
        <begin position="1"/>
        <end position="147"/>
    </location>
</feature>
<feature type="sequence conflict" description="In Ref. 1; AAA23044." evidence="1" ref="1">
    <original>S</original>
    <variation>C</variation>
    <location>
        <position position="23"/>
    </location>
</feature>
<feature type="sequence conflict" description="In Ref. 2; AAC14298." evidence="1" ref="2">
    <original>G</original>
    <variation>R</variation>
    <location>
        <position position="41"/>
    </location>
</feature>
<feature type="sequence conflict" description="In Ref. 2; AAC14298." evidence="1" ref="2">
    <original>S</original>
    <variation>N</variation>
    <location>
        <position position="78"/>
    </location>
</feature>
<feature type="sequence conflict" description="In Ref. 1; AAA23044." evidence="1" ref="1">
    <original>NSSQV</original>
    <variation>IQPGE</variation>
    <location>
        <begin position="125"/>
        <end position="129"/>
    </location>
</feature>
<comment type="function">
    <text>Involved in attachment of the holdfast to the cell. The holdfast is a structure that allows the bacteria to firmly adheres to surfaces.</text>
</comment>
<dbReference type="EMBL" id="M69129">
    <property type="protein sequence ID" value="AAA23044.1"/>
    <property type="molecule type" value="Genomic_DNA"/>
</dbReference>
<dbReference type="EMBL" id="AF058792">
    <property type="protein sequence ID" value="AAC14298.1"/>
    <property type="molecule type" value="Genomic_DNA"/>
</dbReference>
<dbReference type="EMBL" id="AE005673">
    <property type="protein sequence ID" value="AAK24596.1"/>
    <property type="molecule type" value="Genomic_DNA"/>
</dbReference>
<dbReference type="PIR" id="A42610">
    <property type="entry name" value="A42610"/>
</dbReference>
<dbReference type="PIR" id="H87574">
    <property type="entry name" value="H87574"/>
</dbReference>
<dbReference type="RefSeq" id="NP_421428.1">
    <property type="nucleotide sequence ID" value="NC_002696.2"/>
</dbReference>
<dbReference type="RefSeq" id="WP_010920481.1">
    <property type="nucleotide sequence ID" value="NC_002696.2"/>
</dbReference>
<dbReference type="STRING" id="190650.CC_2628"/>
<dbReference type="EnsemblBacteria" id="AAK24596">
    <property type="protein sequence ID" value="AAK24596"/>
    <property type="gene ID" value="CC_2628"/>
</dbReference>
<dbReference type="KEGG" id="ccr:CC_2628"/>
<dbReference type="PATRIC" id="fig|190650.5.peg.2640"/>
<dbReference type="eggNOG" id="ENOG5033885">
    <property type="taxonomic scope" value="Bacteria"/>
</dbReference>
<dbReference type="HOGENOM" id="CLU_145269_0_0_5"/>
<dbReference type="BioCyc" id="CAULO:CC2628-MONOMER"/>
<dbReference type="Proteomes" id="UP000001816">
    <property type="component" value="Chromosome"/>
</dbReference>
<dbReference type="GO" id="GO:0007155">
    <property type="term" value="P:cell adhesion"/>
    <property type="evidence" value="ECO:0007669"/>
    <property type="project" value="UniProtKB-KW"/>
</dbReference>
<dbReference type="InterPro" id="IPR049851">
    <property type="entry name" value="Holdfast_HfaA"/>
</dbReference>
<dbReference type="NCBIfam" id="NF037934">
    <property type="entry name" value="holdfast_HfaA"/>
    <property type="match status" value="1"/>
</dbReference>
<name>HFAA_CAUVC</name>
<gene>
    <name type="primary">hfaA</name>
    <name type="ordered locus">CC_2628</name>
</gene>
<protein>
    <recommendedName>
        <fullName>Holdfast attachment protein A</fullName>
        <shortName>Hfa-A</shortName>
        <shortName>Protein HfaA</shortName>
    </recommendedName>
</protein>